<geneLocation type="mitochondrion"/>
<protein>
    <recommendedName>
        <fullName>Cytochrome c oxidase subunit 2</fullName>
        <ecNumber>7.1.1.9</ecNumber>
    </recommendedName>
    <alternativeName>
        <fullName>Cytochrome c oxidase polypeptide II</fullName>
    </alternativeName>
</protein>
<accession>P29658</accession>
<keyword id="KW-0186">Copper</keyword>
<keyword id="KW-0249">Electron transport</keyword>
<keyword id="KW-0472">Membrane</keyword>
<keyword id="KW-0496">Mitochondrion</keyword>
<keyword id="KW-0999">Mitochondrion inner membrane</keyword>
<keyword id="KW-0679">Respiratory chain</keyword>
<keyword id="KW-1278">Translocase</keyword>
<keyword id="KW-0812">Transmembrane</keyword>
<keyword id="KW-1133">Transmembrane helix</keyword>
<keyword id="KW-0813">Transport</keyword>
<comment type="function">
    <text evidence="2">Component of the cytochrome c oxidase, the last enzyme in the mitochondrial electron transport chain which drives oxidative phosphorylation. The respiratory chain contains 3 multisubunit complexes succinate dehydrogenase (complex II, CII), ubiquinol-cytochrome c oxidoreductase (cytochrome b-c1 complex, complex III, CIII) and cytochrome c oxidase (complex IV, CIV), that cooperate to transfer electrons derived from NADH and succinate to molecular oxygen, creating an electrochemical gradient over the inner membrane that drives transmembrane transport and the ATP synthase. Cytochrome c oxidase is the component of the respiratory chain that catalyzes the reduction of oxygen to water. Electrons originating from reduced cytochrome c in the intermembrane space (IMS) are transferred via the dinuclear copper A center (CU(A)) of subunit 2 and heme A of subunit 1 to the active site in subunit 1, a binuclear center (BNC) formed by heme A3 and copper B (CU(B)). The BNC reduces molecular oxygen to 2 water molecules using 4 electrons from cytochrome c in the IMS and 4 protons from the mitochondrial matrix.</text>
</comment>
<comment type="catalytic activity">
    <reaction evidence="2">
        <text>4 Fe(II)-[cytochrome c] + O2 + 8 H(+)(in) = 4 Fe(III)-[cytochrome c] + 2 H2O + 4 H(+)(out)</text>
        <dbReference type="Rhea" id="RHEA:11436"/>
        <dbReference type="Rhea" id="RHEA-COMP:10350"/>
        <dbReference type="Rhea" id="RHEA-COMP:14399"/>
        <dbReference type="ChEBI" id="CHEBI:15377"/>
        <dbReference type="ChEBI" id="CHEBI:15378"/>
        <dbReference type="ChEBI" id="CHEBI:15379"/>
        <dbReference type="ChEBI" id="CHEBI:29033"/>
        <dbReference type="ChEBI" id="CHEBI:29034"/>
        <dbReference type="EC" id="7.1.1.9"/>
    </reaction>
    <physiologicalReaction direction="left-to-right" evidence="2">
        <dbReference type="Rhea" id="RHEA:11437"/>
    </physiologicalReaction>
</comment>
<comment type="cofactor">
    <cofactor evidence="3">
        <name>Cu cation</name>
        <dbReference type="ChEBI" id="CHEBI:23378"/>
    </cofactor>
    <text evidence="3">Binds a dinuclear copper A center per subunit.</text>
</comment>
<comment type="subunit">
    <text evidence="1 3">Component of the cytochrome c oxidase (complex IV, CIV), a multisubunit enzyme composed of 14 subunits. The complex is composed of a catalytic core of 3 subunits MT-CO1, MT-CO2 and MT-CO3, encoded in the mitochondrial DNA, and 11 supernumerary subunits COX4I, COX5A, COX5B, COX6A, COX6B, COX6C, COX7A, COX7B, COX7C, COX8 and NDUFA4, which are encoded in the nuclear genome. The complex exists as a monomer or a dimer and forms supercomplexes (SCs) in the inner mitochondrial membrane with NADH-ubiquinone oxidoreductase (complex I, CI) and ubiquinol-cytochrome c oxidoreductase (cytochrome b-c1 complex, complex III, CIII), resulting in different assemblies (supercomplex SCI(1)III(2)IV(1) and megacomplex MCI(2)III(2)IV(2)) (By similarity). Found in a complex with TMEM177, COA6, COX18, COX20, SCO1 and SCO2. Interacts with TMEM177 in a COX20-dependent manner. Interacts with COX20. Interacts with COX16 (By similarity).</text>
</comment>
<comment type="subcellular location">
    <subcellularLocation>
        <location evidence="3">Mitochondrion inner membrane</location>
        <topology evidence="3">Multi-pass membrane protein</topology>
    </subcellularLocation>
</comment>
<comment type="similarity">
    <text evidence="4">Belongs to the cytochrome c oxidase subunit 2 family.</text>
</comment>
<dbReference type="EC" id="7.1.1.9"/>
<dbReference type="EMBL" id="M64895">
    <property type="protein sequence ID" value="AAB01461.1"/>
    <property type="molecule type" value="Genomic_DNA"/>
</dbReference>
<dbReference type="GO" id="GO:0005743">
    <property type="term" value="C:mitochondrial inner membrane"/>
    <property type="evidence" value="ECO:0007669"/>
    <property type="project" value="UniProtKB-SubCell"/>
</dbReference>
<dbReference type="GO" id="GO:0045277">
    <property type="term" value="C:respiratory chain complex IV"/>
    <property type="evidence" value="ECO:0000250"/>
    <property type="project" value="UniProtKB"/>
</dbReference>
<dbReference type="GO" id="GO:0004129">
    <property type="term" value="F:cytochrome-c oxidase activity"/>
    <property type="evidence" value="ECO:0007669"/>
    <property type="project" value="UniProtKB-EC"/>
</dbReference>
<dbReference type="GO" id="GO:0042773">
    <property type="term" value="P:ATP synthesis coupled electron transport"/>
    <property type="evidence" value="ECO:0007669"/>
    <property type="project" value="TreeGrafter"/>
</dbReference>
<dbReference type="FunFam" id="1.10.287.90:FF:000001">
    <property type="entry name" value="Cytochrome c oxidase subunit 2"/>
    <property type="match status" value="1"/>
</dbReference>
<dbReference type="Gene3D" id="1.10.287.90">
    <property type="match status" value="1"/>
</dbReference>
<dbReference type="InterPro" id="IPR045187">
    <property type="entry name" value="CcO_II"/>
</dbReference>
<dbReference type="InterPro" id="IPR011759">
    <property type="entry name" value="Cyt_c_oxidase_su2_TM_dom"/>
</dbReference>
<dbReference type="InterPro" id="IPR036257">
    <property type="entry name" value="Cyt_c_oxidase_su2_TM_sf"/>
</dbReference>
<dbReference type="PANTHER" id="PTHR22888:SF9">
    <property type="entry name" value="CYTOCHROME C OXIDASE SUBUNIT 2"/>
    <property type="match status" value="1"/>
</dbReference>
<dbReference type="PANTHER" id="PTHR22888">
    <property type="entry name" value="CYTOCHROME C OXIDASE, SUBUNIT II"/>
    <property type="match status" value="1"/>
</dbReference>
<dbReference type="Pfam" id="PF02790">
    <property type="entry name" value="COX2_TM"/>
    <property type="match status" value="1"/>
</dbReference>
<dbReference type="SUPFAM" id="SSF81464">
    <property type="entry name" value="Cytochrome c oxidase subunit II-like, transmembrane region"/>
    <property type="match status" value="1"/>
</dbReference>
<dbReference type="PROSITE" id="PS50999">
    <property type="entry name" value="COX2_TM"/>
    <property type="match status" value="1"/>
</dbReference>
<reference key="1">
    <citation type="journal article" date="1991" name="Mol. Biol. Evol.">
        <title>Phylogenetic relationships of neopterygian fishes, inferred from mitochondrial DNA sequences.</title>
        <authorList>
            <person name="Normark B.B."/>
            <person name="McCune A.R."/>
            <person name="Harrison R.G."/>
        </authorList>
    </citation>
    <scope>NUCLEOTIDE SEQUENCE [GENOMIC DNA]</scope>
</reference>
<proteinExistence type="inferred from homology"/>
<organism>
    <name type="scientific">Gomphosus varius</name>
    <name type="common">Bird wrasse</name>
    <name type="synonym">Gomphosus tricolor</name>
    <dbReference type="NCBI Taxonomy" id="8249"/>
    <lineage>
        <taxon>Eukaryota</taxon>
        <taxon>Metazoa</taxon>
        <taxon>Chordata</taxon>
        <taxon>Craniata</taxon>
        <taxon>Vertebrata</taxon>
        <taxon>Euteleostomi</taxon>
        <taxon>Actinopterygii</taxon>
        <taxon>Neopterygii</taxon>
        <taxon>Teleostei</taxon>
        <taxon>Neoteleostei</taxon>
        <taxon>Acanthomorphata</taxon>
        <taxon>Eupercaria</taxon>
        <taxon>Labriformes</taxon>
        <taxon>Labridae</taxon>
        <taxon>Gomphosus</taxon>
    </lineage>
</organism>
<feature type="chain" id="PRO_0000183603" description="Cytochrome c oxidase subunit 2">
    <location>
        <begin position="1"/>
        <end position="72" status="greater than"/>
    </location>
</feature>
<feature type="topological domain" description="Mitochondrial intermembrane" evidence="3">
    <location>
        <begin position="1"/>
        <end position="14"/>
    </location>
</feature>
<feature type="transmembrane region" description="Helical; Name=I" evidence="3">
    <location>
        <begin position="15"/>
        <end position="45"/>
    </location>
</feature>
<feature type="topological domain" description="Mitochondrial matrix" evidence="3">
    <location>
        <begin position="46"/>
        <end position="72" status="greater than"/>
    </location>
</feature>
<feature type="non-terminal residue">
    <location>
        <position position="72"/>
    </location>
</feature>
<evidence type="ECO:0000250" key="1">
    <source>
        <dbReference type="UniProtKB" id="P00403"/>
    </source>
</evidence>
<evidence type="ECO:0000250" key="2">
    <source>
        <dbReference type="UniProtKB" id="P00410"/>
    </source>
</evidence>
<evidence type="ECO:0000250" key="3">
    <source>
        <dbReference type="UniProtKB" id="P68530"/>
    </source>
</evidence>
<evidence type="ECO:0000305" key="4"/>
<gene>
    <name type="primary">mt-co2</name>
    <name type="synonym">coii</name>
    <name type="synonym">coxii</name>
    <name type="synonym">mtco2</name>
</gene>
<name>COX2_GOMVA</name>
<sequence length="72" mass="8117">MAHPSQLGFQDAASPVMEELLHFHDHALMIVFLISTLVLYIIVAMVSTKLTNKYXLDSQEIEVIWTXLPAVI</sequence>